<evidence type="ECO:0000250" key="1"/>
<evidence type="ECO:0000256" key="2">
    <source>
        <dbReference type="SAM" id="MobiDB-lite"/>
    </source>
</evidence>
<evidence type="ECO:0000269" key="3">
    <source>
    </source>
</evidence>
<evidence type="ECO:0000269" key="4">
    <source>
    </source>
</evidence>
<evidence type="ECO:0000269" key="5">
    <source>
    </source>
</evidence>
<evidence type="ECO:0000305" key="6"/>
<sequence length="84" mass="9004">MFSLKLFVVFLAVCICVSQAVSYTDCTESGQNYCLCVGSNVCGEGKNCQLSSSGNQCVHGEGTPKPKSQTEGDFEEIPDEDILN</sequence>
<proteinExistence type="evidence at protein level"/>
<comment type="function">
    <text>Hirudin is a potent thrombin-specific protease inhibitor. It forms a stable non-covalent complex with alpha-thrombin, thereby abolishing its ability to cleave fibrinogen.</text>
</comment>
<comment type="subcellular location">
    <subcellularLocation>
        <location>Secreted</location>
    </subcellularLocation>
</comment>
<comment type="similarity">
    <text evidence="6">Belongs to the protease inhibitor I14 (hirudin) family.</text>
</comment>
<feature type="signal peptide" evidence="3 4">
    <location>
        <begin position="1"/>
        <end position="20"/>
    </location>
</feature>
<feature type="chain" id="PRO_0000013443" description="Hirudin-HM2">
    <location>
        <begin position="21"/>
        <end position="84"/>
    </location>
</feature>
<feature type="region of interest" description="Interaction with thrombin active site" evidence="1">
    <location>
        <begin position="21"/>
        <end position="23"/>
    </location>
</feature>
<feature type="region of interest" description="Disordered" evidence="2">
    <location>
        <begin position="53"/>
        <end position="84"/>
    </location>
</feature>
<feature type="region of interest" description="Interaction with fibrinogen-binding exosite of thrombin" evidence="1">
    <location>
        <begin position="73"/>
        <end position="84"/>
    </location>
</feature>
<feature type="compositionally biased region" description="Acidic residues" evidence="2">
    <location>
        <begin position="72"/>
        <end position="84"/>
    </location>
</feature>
<feature type="glycosylation site" description="O-linked (GalNAc...) threonine" evidence="1">
    <location>
        <position position="63"/>
    </location>
</feature>
<feature type="disulfide bond" evidence="5">
    <location>
        <begin position="26"/>
        <end position="34"/>
    </location>
</feature>
<feature type="disulfide bond" evidence="5">
    <location>
        <begin position="36"/>
        <end position="48"/>
    </location>
</feature>
<feature type="disulfide bond" evidence="5">
    <location>
        <begin position="42"/>
        <end position="57"/>
    </location>
</feature>
<feature type="sequence conflict" description="In Ref. 2; AA sequence." evidence="6" ref="2">
    <original>L</original>
    <variation>K</variation>
    <location>
        <position position="83"/>
    </location>
</feature>
<name>HIRM2_HIRMN</name>
<protein>
    <recommendedName>
        <fullName>Hirudin-HM2</fullName>
    </recommendedName>
    <alternativeName>
        <fullName>Bufrudin</fullName>
    </alternativeName>
    <alternativeName>
        <fullName>Hirudin-HV1</fullName>
    </alternativeName>
</protein>
<dbReference type="EMBL" id="X72786">
    <property type="protein sequence ID" value="CAA51293.1"/>
    <property type="molecule type" value="Genomic_DNA"/>
</dbReference>
<dbReference type="PIR" id="S33329">
    <property type="entry name" value="S33329"/>
</dbReference>
<dbReference type="SMR" id="P81492"/>
<dbReference type="MEROPS" id="I14.001"/>
<dbReference type="GO" id="GO:0005576">
    <property type="term" value="C:extracellular region"/>
    <property type="evidence" value="ECO:0007669"/>
    <property type="project" value="UniProtKB-SubCell"/>
</dbReference>
<dbReference type="GO" id="GO:0004867">
    <property type="term" value="F:serine-type endopeptidase inhibitor activity"/>
    <property type="evidence" value="ECO:0007669"/>
    <property type="project" value="UniProtKB-KW"/>
</dbReference>
<dbReference type="Gene3D" id="2.70.10.10">
    <property type="entry name" value="Thrombin Inhibitor (Hirudin), subunit I"/>
    <property type="match status" value="1"/>
</dbReference>
<dbReference type="InterPro" id="IPR024793">
    <property type="entry name" value="Hirudin"/>
</dbReference>
<dbReference type="InterPro" id="IPR011061">
    <property type="entry name" value="Hirudin/antistatin"/>
</dbReference>
<dbReference type="InterPro" id="IPR000429">
    <property type="entry name" value="Prot_inh_hirudin"/>
</dbReference>
<dbReference type="Pfam" id="PF00713">
    <property type="entry name" value="Hirudin"/>
    <property type="match status" value="1"/>
</dbReference>
<dbReference type="PIRSF" id="PIRSF001640">
    <property type="entry name" value="Hirudin"/>
    <property type="match status" value="1"/>
</dbReference>
<dbReference type="PRINTS" id="PR00777">
    <property type="entry name" value="HIRUDIN"/>
</dbReference>
<dbReference type="SUPFAM" id="SSF57262">
    <property type="entry name" value="Leech antihemostatic proteins"/>
    <property type="match status" value="1"/>
</dbReference>
<reference key="1">
    <citation type="journal article" date="1993" name="Eur. J. Biochem.">
        <title>Novel hirudin variants from the leech Hirudinaria manillensis. Amino acid sequence, cDNA cloning and genomic organization.</title>
        <authorList>
            <person name="Scacheri E."/>
            <person name="Nitti G."/>
            <person name="Valsasina B."/>
            <person name="Orsini G."/>
            <person name="Visco C."/>
            <person name="Ferrera M."/>
            <person name="Sawyer R.T."/>
            <person name="Sarmientos P."/>
        </authorList>
    </citation>
    <scope>NUCLEOTIDE SEQUENCE [GENOMIC DNA]</scope>
    <scope>PROTEIN SEQUENCE OF 21-84</scope>
</reference>
<reference key="2">
    <citation type="journal article" date="1993" name="J. Protein Chem.">
        <title>The complete amino acid sequence of a hirudin variant from the leech Hirudinaria manillensis.</title>
        <authorList>
            <person name="Electricwala A."/>
            <person name="Hartwell R."/>
            <person name="Scawen M.D."/>
            <person name="Atkinson T."/>
        </authorList>
    </citation>
    <scope>PROTEIN SEQUENCE OF 21-83</scope>
    <source>
        <tissue>Head</tissue>
    </source>
</reference>
<reference key="3">
    <citation type="journal article" date="1997" name="Biopolymers">
        <title>NMR solution structure of a novel hirudin variant HM2, N-terminal 1-47 and N64--&gt;V + G mutant.</title>
        <authorList>
            <person name="Nicastro G."/>
            <person name="Baumer L."/>
            <person name="Bolis G."/>
            <person name="Tato M."/>
        </authorList>
    </citation>
    <scope>STRUCTURE BY NMR OF 21-84</scope>
    <scope>DISULFIDE BONDS</scope>
</reference>
<keyword id="KW-0903">Direct protein sequencing</keyword>
<keyword id="KW-1015">Disulfide bond</keyword>
<keyword id="KW-0325">Glycoprotein</keyword>
<keyword id="KW-0646">Protease inhibitor</keyword>
<keyword id="KW-0964">Secreted</keyword>
<keyword id="KW-0722">Serine protease inhibitor</keyword>
<keyword id="KW-0732">Signal</keyword>
<organism>
    <name type="scientific">Hirudinaria manillensis</name>
    <name type="common">Asian medical leech</name>
    <name type="synonym">Poecilobdella manillensis</name>
    <dbReference type="NCBI Taxonomy" id="1348078"/>
    <lineage>
        <taxon>Eukaryota</taxon>
        <taxon>Metazoa</taxon>
        <taxon>Spiralia</taxon>
        <taxon>Lophotrochozoa</taxon>
        <taxon>Annelida</taxon>
        <taxon>Clitellata</taxon>
        <taxon>Hirudinea</taxon>
        <taxon>Hirudinida</taxon>
        <taxon>Hirudiniformes</taxon>
        <taxon>Hirudinidae</taxon>
        <taxon>Hirudinaria</taxon>
    </lineage>
</organism>
<accession>P81492</accession>
<accession>Q07557</accession>